<reference key="1">
    <citation type="journal article" date="1997" name="Nature">
        <title>The nucleotide sequence of Saccharomyces cerevisiae chromosome V.</title>
        <authorList>
            <person name="Dietrich F.S."/>
            <person name="Mulligan J.T."/>
            <person name="Hennessy K.M."/>
            <person name="Yelton M.A."/>
            <person name="Allen E."/>
            <person name="Araujo R."/>
            <person name="Aviles E."/>
            <person name="Berno A."/>
            <person name="Brennan T."/>
            <person name="Carpenter J."/>
            <person name="Chen E."/>
            <person name="Cherry J.M."/>
            <person name="Chung E."/>
            <person name="Duncan M."/>
            <person name="Guzman E."/>
            <person name="Hartzell G."/>
            <person name="Hunicke-Smith S."/>
            <person name="Hyman R.W."/>
            <person name="Kayser A."/>
            <person name="Komp C."/>
            <person name="Lashkari D."/>
            <person name="Lew H."/>
            <person name="Lin D."/>
            <person name="Mosedale D."/>
            <person name="Nakahara K."/>
            <person name="Namath A."/>
            <person name="Norgren R."/>
            <person name="Oefner P."/>
            <person name="Oh C."/>
            <person name="Petel F.X."/>
            <person name="Roberts D."/>
            <person name="Sehl P."/>
            <person name="Schramm S."/>
            <person name="Shogren T."/>
            <person name="Smith V."/>
            <person name="Taylor P."/>
            <person name="Wei Y."/>
            <person name="Botstein D."/>
            <person name="Davis R.W."/>
        </authorList>
    </citation>
    <scope>NUCLEOTIDE SEQUENCE [LARGE SCALE GENOMIC DNA]</scope>
    <source>
        <strain>ATCC 204508 / S288c</strain>
    </source>
</reference>
<reference key="2">
    <citation type="journal article" date="2014" name="G3 (Bethesda)">
        <title>The reference genome sequence of Saccharomyces cerevisiae: Then and now.</title>
        <authorList>
            <person name="Engel S.R."/>
            <person name="Dietrich F.S."/>
            <person name="Fisk D.G."/>
            <person name="Binkley G."/>
            <person name="Balakrishnan R."/>
            <person name="Costanzo M.C."/>
            <person name="Dwight S.S."/>
            <person name="Hitz B.C."/>
            <person name="Karra K."/>
            <person name="Nash R.S."/>
            <person name="Weng S."/>
            <person name="Wong E.D."/>
            <person name="Lloyd P."/>
            <person name="Skrzypek M.S."/>
            <person name="Miyasato S.R."/>
            <person name="Simison M."/>
            <person name="Cherry J.M."/>
        </authorList>
    </citation>
    <scope>GENOME REANNOTATION</scope>
    <source>
        <strain>ATCC 204508 / S288c</strain>
    </source>
</reference>
<reference key="3">
    <citation type="journal article" date="2003" name="Proc. Natl. Acad. Sci. U.S.A.">
        <title>The proteome of Saccharomyces cerevisiae mitochondria.</title>
        <authorList>
            <person name="Sickmann A."/>
            <person name="Reinders J."/>
            <person name="Wagner Y."/>
            <person name="Joppich C."/>
            <person name="Zahedi R.P."/>
            <person name="Meyer H.E."/>
            <person name="Schoenfisch B."/>
            <person name="Perschil I."/>
            <person name="Chacinska A."/>
            <person name="Guiard B."/>
            <person name="Rehling P."/>
            <person name="Pfanner N."/>
            <person name="Meisinger C."/>
        </authorList>
    </citation>
    <scope>SUBCELLULAR LOCATION [LARGE SCALE ANALYSIS]</scope>
    <source>
        <strain>ATCC 76625 / YPH499</strain>
    </source>
</reference>
<reference key="4">
    <citation type="journal article" date="2006" name="Biochim. Biophys. Acta">
        <title>Deviation of carbohydrate metabolism by the SIT4 phosphatase in Saccharomyces cerevisiae.</title>
        <authorList>
            <person name="Jablonka W."/>
            <person name="Guzman S."/>
            <person name="Ramirez J."/>
            <person name="Montero-Lomeli M."/>
        </authorList>
    </citation>
    <scope>INDUCTION</scope>
</reference>
<sequence length="107" mass="12458">MLILLRLSEVCVNFVIIIGIPLLIEASILCIQNILELLLKGIGILKFNRYLHTIILRLFFLSFYMLHFPITLSILAFQLPLNLLTLSQASFHLPRSHMILYQQQECY</sequence>
<protein>
    <recommendedName>
        <fullName>Uncharacterized protein YER181C, mitochondrial</fullName>
    </recommendedName>
</protein>
<evidence type="ECO:0000255" key="1"/>
<evidence type="ECO:0000269" key="2">
    <source>
    </source>
</evidence>
<evidence type="ECO:0000269" key="3">
    <source>
    </source>
</evidence>
<gene>
    <name type="ordered locus">YER181C</name>
</gene>
<feature type="chain" id="PRO_0000202659" description="Uncharacterized protein YER181C, mitochondrial">
    <location>
        <begin position="1"/>
        <end position="107"/>
    </location>
</feature>
<feature type="transmembrane region" description="Helical" evidence="1">
    <location>
        <begin position="11"/>
        <end position="31"/>
    </location>
</feature>
<feature type="transmembrane region" description="Helical" evidence="1">
    <location>
        <begin position="58"/>
        <end position="78"/>
    </location>
</feature>
<accession>P40097</accession>
<accession>A0A1S0T074</accession>
<keyword id="KW-0472">Membrane</keyword>
<keyword id="KW-0496">Mitochondrion</keyword>
<keyword id="KW-1185">Reference proteome</keyword>
<keyword id="KW-0812">Transmembrane</keyword>
<keyword id="KW-1133">Transmembrane helix</keyword>
<organism>
    <name type="scientific">Saccharomyces cerevisiae (strain ATCC 204508 / S288c)</name>
    <name type="common">Baker's yeast</name>
    <dbReference type="NCBI Taxonomy" id="559292"/>
    <lineage>
        <taxon>Eukaryota</taxon>
        <taxon>Fungi</taxon>
        <taxon>Dikarya</taxon>
        <taxon>Ascomycota</taxon>
        <taxon>Saccharomycotina</taxon>
        <taxon>Saccharomycetes</taxon>
        <taxon>Saccharomycetales</taxon>
        <taxon>Saccharomycetaceae</taxon>
        <taxon>Saccharomyces</taxon>
    </lineage>
</organism>
<proteinExistence type="evidence at transcript level"/>
<dbReference type="EMBL" id="U18922">
    <property type="protein sequence ID" value="AAB64708.1"/>
    <property type="molecule type" value="Genomic_DNA"/>
</dbReference>
<dbReference type="EMBL" id="BK006939">
    <property type="protein sequence ID" value="DAA80290.1"/>
    <property type="molecule type" value="Genomic_DNA"/>
</dbReference>
<dbReference type="PIR" id="S50684">
    <property type="entry name" value="S50684"/>
</dbReference>
<dbReference type="RefSeq" id="NP_001335770.1">
    <property type="nucleotide sequence ID" value="NM_001348828.1"/>
</dbReference>
<dbReference type="DIP" id="DIP-5471N"/>
<dbReference type="FunCoup" id="P40097">
    <property type="interactions" value="16"/>
</dbReference>
<dbReference type="PaxDb" id="4932-YER181C"/>
<dbReference type="EnsemblFungi" id="YER181C_mRNA">
    <property type="protein sequence ID" value="YER181C"/>
    <property type="gene ID" value="YER181C"/>
</dbReference>
<dbReference type="GeneID" id="856930"/>
<dbReference type="AGR" id="SGD:S000000983"/>
<dbReference type="SGD" id="S000000983">
    <property type="gene designation" value="YER181C"/>
</dbReference>
<dbReference type="HOGENOM" id="CLU_2212008_0_0_1"/>
<dbReference type="InParanoid" id="P40097"/>
<dbReference type="PRO" id="PR:P40097"/>
<dbReference type="Proteomes" id="UP000002311">
    <property type="component" value="Chromosome V"/>
</dbReference>
<dbReference type="RNAct" id="P40097">
    <property type="molecule type" value="protein"/>
</dbReference>
<dbReference type="GO" id="GO:0031966">
    <property type="term" value="C:mitochondrial membrane"/>
    <property type="evidence" value="ECO:0007669"/>
    <property type="project" value="UniProtKB-SubCell"/>
</dbReference>
<dbReference type="GO" id="GO:0005739">
    <property type="term" value="C:mitochondrion"/>
    <property type="evidence" value="ECO:0007005"/>
    <property type="project" value="SGD"/>
</dbReference>
<comment type="subcellular location">
    <subcellularLocation>
        <location evidence="2">Mitochondrion membrane</location>
        <topology evidence="2">Multi-pass membrane protein</topology>
    </subcellularLocation>
</comment>
<comment type="induction">
    <text evidence="3">Down-regulated in the absence of SIT4.</text>
</comment>
<name>YE11_YEAST</name>